<evidence type="ECO:0000255" key="1">
    <source>
        <dbReference type="HAMAP-Rule" id="MF_00600"/>
    </source>
</evidence>
<evidence type="ECO:0000305" key="2"/>
<reference key="1">
    <citation type="journal article" date="1995" name="Arch. Pathol. Lab. Med.">
        <title>Rapid Mycobacterium species assignment and unambiguous identification of mutations associated with antimicrobial resistance in Mycobacterium tuberculosis by automated DNA sequencing.</title>
        <authorList>
            <person name="Kapur V."/>
            <person name="Li L.L."/>
            <person name="Hamrick M.R."/>
            <person name="Plikaytis B.B."/>
            <person name="Shinnick T.M."/>
            <person name="Telenti A."/>
            <person name="Jacobs W.R. Jr."/>
            <person name="Banerjee A."/>
            <person name="Cole S."/>
            <person name="Yuen K.Y."/>
            <person name="Clarridge J.E."/>
            <person name="Kreiswirth B.N."/>
            <person name="Musser J.M."/>
        </authorList>
    </citation>
    <scope>NUCLEOTIDE SEQUENCE [GENOMIC DNA]</scope>
    <source>
        <strain>85-961</strain>
        <strain>91-627</strain>
        <strain>91-IT-197</strain>
        <strain>TMH31</strain>
    </source>
</reference>
<name>CH60_MYCKA</name>
<feature type="chain" id="PRO_0000063435" description="Chaperonin GroEL">
    <location>
        <begin position="1" status="less than"/>
        <end position="120" status="greater than"/>
    </location>
</feature>
<feature type="binding site" evidence="1">
    <location>
        <begin position="23"/>
        <end position="27"/>
    </location>
    <ligand>
        <name>ATP</name>
        <dbReference type="ChEBI" id="CHEBI:30616"/>
    </ligand>
</feature>
<feature type="sequence variant" description="In strain: 85-961.">
    <original>K</original>
    <variation>R</variation>
    <location>
        <position position="37"/>
    </location>
</feature>
<feature type="sequence variant" description="In strain: 85-961.">
    <original>G</original>
    <variation>S</variation>
    <location>
        <position position="70"/>
    </location>
</feature>
<feature type="sequence variant" description="In strain: 85-961.">
    <original>E</original>
    <variation>D</variation>
    <location>
        <position position="78"/>
    </location>
</feature>
<feature type="non-terminal residue">
    <location>
        <position position="1"/>
    </location>
</feature>
<feature type="non-terminal residue">
    <location>
        <position position="120"/>
    </location>
</feature>
<proteinExistence type="inferred from homology"/>
<sequence length="120" mass="12351">PYEKIGAELVKEVAKKTDDVAGDGTTTATVLAQALVKEGLRNVAAGANPLGLKRGIEKAVEKVTETLLKGAKEVETKEQIAATAAISAGDQSIGDLIAEAMDKVGNEGVITVEESNTFGL</sequence>
<comment type="function">
    <text evidence="1">Together with its co-chaperonin GroES, plays an essential role in assisting protein folding. The GroEL-GroES system forms a nano-cage that allows encapsulation of the non-native substrate proteins and provides a physical environment optimized to promote and accelerate protein folding.</text>
</comment>
<comment type="catalytic activity">
    <reaction evidence="1">
        <text>ATP + H2O + a folded polypeptide = ADP + phosphate + an unfolded polypeptide.</text>
        <dbReference type="EC" id="5.6.1.7"/>
    </reaction>
</comment>
<comment type="subunit">
    <text evidence="1">Forms a cylinder of 14 subunits composed of two heptameric rings stacked back-to-back. Interacts with the co-chaperonin GroES.</text>
</comment>
<comment type="subcellular location">
    <subcellularLocation>
        <location evidence="1">Cytoplasm</location>
    </subcellularLocation>
</comment>
<comment type="similarity">
    <text evidence="1 2">Belongs to the chaperonin (HSP60) family.</text>
</comment>
<accession>Q49594</accession>
<accession>Q49595</accession>
<accession>Q49596</accession>
<protein>
    <recommendedName>
        <fullName evidence="1">Chaperonin GroEL</fullName>
        <ecNumber evidence="1">5.6.1.7</ecNumber>
    </recommendedName>
    <alternativeName>
        <fullName evidence="1">60 kDa chaperonin</fullName>
    </alternativeName>
    <alternativeName>
        <fullName>65 kDa heat shock protein</fullName>
    </alternativeName>
    <alternativeName>
        <fullName evidence="1">Chaperonin-60</fullName>
        <shortName evidence="1">Cpn60</shortName>
    </alternativeName>
</protein>
<gene>
    <name evidence="1" type="primary">groEL</name>
    <name evidence="1" type="synonym">groL</name>
    <name type="synonym">mopA</name>
</gene>
<organism>
    <name type="scientific">Mycobacterium kansasii</name>
    <dbReference type="NCBI Taxonomy" id="1768"/>
    <lineage>
        <taxon>Bacteria</taxon>
        <taxon>Bacillati</taxon>
        <taxon>Actinomycetota</taxon>
        <taxon>Actinomycetes</taxon>
        <taxon>Mycobacteriales</taxon>
        <taxon>Mycobacteriaceae</taxon>
        <taxon>Mycobacterium</taxon>
    </lineage>
</organism>
<dbReference type="EC" id="5.6.1.7" evidence="1"/>
<dbReference type="EMBL" id="U17945">
    <property type="protein sequence ID" value="AAB39064.1"/>
    <property type="molecule type" value="Genomic_DNA"/>
</dbReference>
<dbReference type="EMBL" id="U17946">
    <property type="protein sequence ID" value="AAB39065.1"/>
    <property type="molecule type" value="Genomic_DNA"/>
</dbReference>
<dbReference type="EMBL" id="U17947">
    <property type="protein sequence ID" value="AAB39066.1"/>
    <property type="molecule type" value="Genomic_DNA"/>
</dbReference>
<dbReference type="SMR" id="Q49594"/>
<dbReference type="STRING" id="1768.B1T50_18145"/>
<dbReference type="GO" id="GO:0005737">
    <property type="term" value="C:cytoplasm"/>
    <property type="evidence" value="ECO:0007669"/>
    <property type="project" value="UniProtKB-SubCell"/>
</dbReference>
<dbReference type="GO" id="GO:0005524">
    <property type="term" value="F:ATP binding"/>
    <property type="evidence" value="ECO:0007669"/>
    <property type="project" value="UniProtKB-KW"/>
</dbReference>
<dbReference type="GO" id="GO:0140662">
    <property type="term" value="F:ATP-dependent protein folding chaperone"/>
    <property type="evidence" value="ECO:0007669"/>
    <property type="project" value="InterPro"/>
</dbReference>
<dbReference type="GO" id="GO:0016853">
    <property type="term" value="F:isomerase activity"/>
    <property type="evidence" value="ECO:0007669"/>
    <property type="project" value="UniProtKB-KW"/>
</dbReference>
<dbReference type="GO" id="GO:0042026">
    <property type="term" value="P:protein refolding"/>
    <property type="evidence" value="ECO:0007669"/>
    <property type="project" value="InterPro"/>
</dbReference>
<dbReference type="Gene3D" id="1.10.560.10">
    <property type="entry name" value="GroEL-like equatorial domain"/>
    <property type="match status" value="1"/>
</dbReference>
<dbReference type="Gene3D" id="3.30.260.10">
    <property type="entry name" value="TCP-1-like chaperonin intermediate domain"/>
    <property type="match status" value="1"/>
</dbReference>
<dbReference type="InterPro" id="IPR001844">
    <property type="entry name" value="Cpn60/GroEL"/>
</dbReference>
<dbReference type="InterPro" id="IPR002423">
    <property type="entry name" value="Cpn60/GroEL/TCP-1"/>
</dbReference>
<dbReference type="InterPro" id="IPR027413">
    <property type="entry name" value="GROEL-like_equatorial_sf"/>
</dbReference>
<dbReference type="InterPro" id="IPR027410">
    <property type="entry name" value="TCP-1-like_intermed_sf"/>
</dbReference>
<dbReference type="PANTHER" id="PTHR45633">
    <property type="entry name" value="60 KDA HEAT SHOCK PROTEIN, MITOCHONDRIAL"/>
    <property type="match status" value="1"/>
</dbReference>
<dbReference type="Pfam" id="PF00118">
    <property type="entry name" value="Cpn60_TCP1"/>
    <property type="match status" value="1"/>
</dbReference>
<dbReference type="SUPFAM" id="SSF48592">
    <property type="entry name" value="GroEL equatorial domain-like"/>
    <property type="match status" value="1"/>
</dbReference>
<keyword id="KW-0067">ATP-binding</keyword>
<keyword id="KW-0143">Chaperone</keyword>
<keyword id="KW-0963">Cytoplasm</keyword>
<keyword id="KW-0413">Isomerase</keyword>
<keyword id="KW-0547">Nucleotide-binding</keyword>
<keyword id="KW-0346">Stress response</keyword>